<organism>
    <name type="scientific">Salmonella choleraesuis (strain SC-B67)</name>
    <dbReference type="NCBI Taxonomy" id="321314"/>
    <lineage>
        <taxon>Bacteria</taxon>
        <taxon>Pseudomonadati</taxon>
        <taxon>Pseudomonadota</taxon>
        <taxon>Gammaproteobacteria</taxon>
        <taxon>Enterobacterales</taxon>
        <taxon>Enterobacteriaceae</taxon>
        <taxon>Salmonella</taxon>
    </lineage>
</organism>
<sequence>MTVLIHVLGSDIPHHNHTVLRFFNDTLAATSEHAREFMVAGEDNGFTESCPALSLRFYGSKKVLAQAVIAKAKANRRQRFFFHGQFNTSLWLALLSGGIKPAQFYWHIWGADLYEVSHGLKFRLFYPLRRIAQGRVGGVFATRGDLSYFARQHPGVRGELLYFPTRMDPSLNAMAKERQRAGKLTILVGNSGDRSNQHIAALRAVYQQFGDTVNVVVPMGYPANNQAYIDEVRQAGLALFSAENLQILSEKMEFDAYLALLRQCDLGYFIFARQQGIGTLCLLIQADIPCVLNRDNPFWQDMAEQHLPVLFTTDDLNEQVVREAQRQLASVDKSGITFFSPNYLQPWHNALRIAAGEAE</sequence>
<protein>
    <recommendedName>
        <fullName evidence="1">TDP-N-acetylfucosamine:lipid II N-acetylfucosaminyltransferase</fullName>
        <ecNumber evidence="1">2.4.1.325</ecNumber>
    </recommendedName>
    <alternativeName>
        <fullName evidence="1">4-alpha-L-fucosyltransferase</fullName>
    </alternativeName>
    <alternativeName>
        <fullName evidence="1">TDP-Fuc4NAc:lipid II Fuc4NAc transferase</fullName>
        <shortName evidence="1">Fuc4NAc transferase</shortName>
    </alternativeName>
</protein>
<evidence type="ECO:0000255" key="1">
    <source>
        <dbReference type="HAMAP-Rule" id="MF_01002"/>
    </source>
</evidence>
<feature type="chain" id="PRO_0000216185" description="TDP-N-acetylfucosamine:lipid II N-acetylfucosaminyltransferase">
    <location>
        <begin position="1"/>
        <end position="359"/>
    </location>
</feature>
<accession>Q57HS4</accession>
<name>WECF_SALCH</name>
<dbReference type="EC" id="2.4.1.325" evidence="1"/>
<dbReference type="EMBL" id="AE017220">
    <property type="protein sequence ID" value="AAX67738.1"/>
    <property type="molecule type" value="Genomic_DNA"/>
</dbReference>
<dbReference type="RefSeq" id="WP_001541192.1">
    <property type="nucleotide sequence ID" value="NC_006905.1"/>
</dbReference>
<dbReference type="CAZy" id="GT56">
    <property type="family name" value="Glycosyltransferase Family 56"/>
</dbReference>
<dbReference type="KEGG" id="sec:SCH_3832"/>
<dbReference type="HOGENOM" id="CLU_066584_0_0_6"/>
<dbReference type="UniPathway" id="UPA00566"/>
<dbReference type="Proteomes" id="UP000000538">
    <property type="component" value="Chromosome"/>
</dbReference>
<dbReference type="GO" id="GO:0005886">
    <property type="term" value="C:plasma membrane"/>
    <property type="evidence" value="ECO:0007669"/>
    <property type="project" value="UniProtKB-SubCell"/>
</dbReference>
<dbReference type="GO" id="GO:0102031">
    <property type="term" value="F:4-acetamido-4,6-dideoxy-D-galactose transferase activity"/>
    <property type="evidence" value="ECO:0007669"/>
    <property type="project" value="UniProtKB-EC"/>
</dbReference>
<dbReference type="GO" id="GO:0008417">
    <property type="term" value="F:fucosyltransferase activity"/>
    <property type="evidence" value="ECO:0007669"/>
    <property type="project" value="InterPro"/>
</dbReference>
<dbReference type="GO" id="GO:0009246">
    <property type="term" value="P:enterobacterial common antigen biosynthetic process"/>
    <property type="evidence" value="ECO:0007669"/>
    <property type="project" value="UniProtKB-UniRule"/>
</dbReference>
<dbReference type="GO" id="GO:0036065">
    <property type="term" value="P:fucosylation"/>
    <property type="evidence" value="ECO:0007669"/>
    <property type="project" value="InterPro"/>
</dbReference>
<dbReference type="HAMAP" id="MF_01002">
    <property type="entry name" value="WecF_RffT"/>
    <property type="match status" value="1"/>
</dbReference>
<dbReference type="InterPro" id="IPR009993">
    <property type="entry name" value="WecF"/>
</dbReference>
<dbReference type="NCBIfam" id="NF002753">
    <property type="entry name" value="PRK02797.1-2"/>
    <property type="match status" value="1"/>
</dbReference>
<dbReference type="NCBIfam" id="NF002754">
    <property type="entry name" value="PRK02797.1-3"/>
    <property type="match status" value="1"/>
</dbReference>
<dbReference type="Pfam" id="PF07429">
    <property type="entry name" value="Glyco_transf_56"/>
    <property type="match status" value="1"/>
</dbReference>
<proteinExistence type="inferred from homology"/>
<reference key="1">
    <citation type="journal article" date="2005" name="Nucleic Acids Res.">
        <title>The genome sequence of Salmonella enterica serovar Choleraesuis, a highly invasive and resistant zoonotic pathogen.</title>
        <authorList>
            <person name="Chiu C.-H."/>
            <person name="Tang P."/>
            <person name="Chu C."/>
            <person name="Hu S."/>
            <person name="Bao Q."/>
            <person name="Yu J."/>
            <person name="Chou Y.-Y."/>
            <person name="Wang H.-S."/>
            <person name="Lee Y.-S."/>
        </authorList>
    </citation>
    <scope>NUCLEOTIDE SEQUENCE [LARGE SCALE GENOMIC DNA]</scope>
    <source>
        <strain>SC-B67</strain>
    </source>
</reference>
<keyword id="KW-0997">Cell inner membrane</keyword>
<keyword id="KW-1003">Cell membrane</keyword>
<keyword id="KW-0328">Glycosyltransferase</keyword>
<keyword id="KW-0472">Membrane</keyword>
<keyword id="KW-0808">Transferase</keyword>
<gene>
    <name evidence="1" type="primary">wecF</name>
    <name evidence="1" type="synonym">rffT</name>
    <name type="ordered locus">SCH_3832</name>
</gene>
<comment type="function">
    <text evidence="1">Catalyzes the synthesis of Und-PP-GlcNAc-ManNAcA-Fuc4NAc (Lipid III), the third lipid-linked intermediate involved in ECA synthesis.</text>
</comment>
<comment type="catalytic activity">
    <reaction evidence="1">
        <text>beta-D-ManNAcA-(1-&gt;4)-alpha-D-GlcNAc-di-trans,octa-cis-undecaprenyl diphosphate + dTDP-4-acetamido-4,6-dideoxy-alpha-D-galactose = alpha-D-FucNAc4-(1-&gt;4)-beta-D-ManNAcA-(1-&gt;4)-D-GlcNAc-undecaprenyl diphosphate + dTDP + H(+)</text>
        <dbReference type="Rhea" id="RHEA:28759"/>
        <dbReference type="ChEBI" id="CHEBI:15378"/>
        <dbReference type="ChEBI" id="CHEBI:58369"/>
        <dbReference type="ChEBI" id="CHEBI:61495"/>
        <dbReference type="ChEBI" id="CHEBI:61496"/>
        <dbReference type="ChEBI" id="CHEBI:68493"/>
        <dbReference type="EC" id="2.4.1.325"/>
    </reaction>
</comment>
<comment type="pathway">
    <text evidence="1">Bacterial outer membrane biogenesis; enterobacterial common antigen biosynthesis.</text>
</comment>
<comment type="subcellular location">
    <subcellularLocation>
        <location evidence="1">Cell inner membrane</location>
        <topology evidence="1">Peripheral membrane protein</topology>
    </subcellularLocation>
</comment>
<comment type="similarity">
    <text evidence="1">Belongs to the glycosyltransferase 56 family.</text>
</comment>